<keyword id="KW-0085">Behavior</keyword>
<keyword id="KW-1003">Cell membrane</keyword>
<keyword id="KW-0325">Glycoprotein</keyword>
<keyword id="KW-0472">Membrane</keyword>
<keyword id="KW-0552">Olfaction</keyword>
<keyword id="KW-0675">Receptor</keyword>
<keyword id="KW-1185">Reference proteome</keyword>
<keyword id="KW-0716">Sensory transduction</keyword>
<keyword id="KW-0807">Transducer</keyword>
<keyword id="KW-0812">Transmembrane</keyword>
<keyword id="KW-1133">Transmembrane helix</keyword>
<gene>
    <name type="primary">SGPRor7</name>
    <name type="synonym">Orco</name>
    <name type="ORF">AAEL005776</name>
</gene>
<feature type="chain" id="PRO_0000425597" description="Odorant receptor coreceptor">
    <location>
        <begin position="1"/>
        <end position="478"/>
    </location>
</feature>
<feature type="topological domain" description="Cytoplasmic" evidence="2">
    <location>
        <begin position="1"/>
        <end position="43"/>
    </location>
</feature>
<feature type="transmembrane region" description="Helical" evidence="2">
    <location>
        <begin position="44"/>
        <end position="64"/>
    </location>
</feature>
<feature type="topological domain" description="Extracellular" evidence="2">
    <location>
        <begin position="65"/>
        <end position="73"/>
    </location>
</feature>
<feature type="transmembrane region" description="Helical" evidence="2">
    <location>
        <begin position="74"/>
        <end position="94"/>
    </location>
</feature>
<feature type="topological domain" description="Cytoplasmic" evidence="2">
    <location>
        <begin position="95"/>
        <end position="133"/>
    </location>
</feature>
<feature type="transmembrane region" description="Helical" evidence="2">
    <location>
        <begin position="134"/>
        <end position="154"/>
    </location>
</feature>
<feature type="topological domain" description="Extracellular" evidence="2">
    <location>
        <begin position="155"/>
        <end position="187"/>
    </location>
</feature>
<feature type="transmembrane region" description="Helical" evidence="2">
    <location>
        <begin position="188"/>
        <end position="208"/>
    </location>
</feature>
<feature type="topological domain" description="Cytoplasmic" evidence="2">
    <location>
        <begin position="209"/>
        <end position="343"/>
    </location>
</feature>
<feature type="transmembrane region" description="Helical" evidence="2">
    <location>
        <begin position="344"/>
        <end position="364"/>
    </location>
</feature>
<feature type="topological domain" description="Extracellular" evidence="2">
    <location>
        <begin position="365"/>
        <end position="382"/>
    </location>
</feature>
<feature type="transmembrane region" description="Helical" evidence="2">
    <location>
        <begin position="383"/>
        <end position="403"/>
    </location>
</feature>
<feature type="topological domain" description="Cytoplasmic" evidence="2">
    <location>
        <begin position="404"/>
        <end position="454"/>
    </location>
</feature>
<feature type="transmembrane region" description="Helical" evidence="2">
    <location>
        <begin position="455"/>
        <end position="475"/>
    </location>
</feature>
<feature type="topological domain" description="Extracellular" evidence="2">
    <location>
        <begin position="476"/>
        <end position="478"/>
    </location>
</feature>
<feature type="glycosylation site" description="N-linked (GlcNAc...) asparagine" evidence="2">
    <location>
        <position position="167"/>
    </location>
</feature>
<feature type="sequence conflict" description="In Ref. 2; AAT01220." evidence="7" ref="2">
    <original>L</original>
    <variation>A</variation>
    <location>
        <position position="13"/>
    </location>
</feature>
<feature type="sequence conflict" description="In Ref. 2; AAT01220." evidence="7" ref="2">
    <location>
        <position position="195"/>
    </location>
</feature>
<comment type="function">
    <text evidence="3 4 5 6">Odorant coreceptor which complexes with conventional odorant receptors (ORs) to form odorant-sensing units, providing sensitive and prolonged odorant signaling and calcium permeability. Orco is a universal and integral part of the functional odorant receptor, involved in the dendritic localization of other olfactory receptors. Plays a key role in preferred attraction of females for humans over non-human hosts for blood feeding. Human attraction plays a crucial role in the transmission of dengue and yellow fever by the mosquito. Also required for the response to the insect repellent IR3535; or to N,N-Diethyl-meta-toluamide (DEET), the most widely used insect repellent worldwide.</text>
</comment>
<comment type="subunit">
    <text>Heterodimer with conventional odorant receptors (ORs). Complexes exist early in the endomembrane system in olfactory sensory neurons (OSNs), coupling these complexes to the conserved ciliary trafficking pathway.</text>
</comment>
<comment type="subcellular location">
    <subcellularLocation>
        <location evidence="1">Cell membrane</location>
        <topology>Multi-pass membrane protein</topology>
    </subcellularLocation>
</comment>
<comment type="tissue specificity">
    <text evidence="3">Found specifically within most antennal and maxillary palp sensilla, as well as in a subset of proboscis sensilla.</text>
</comment>
<comment type="developmental stage">
    <text>Expressed in adult chemosensory tissues and during several stages of development.</text>
</comment>
<comment type="disruption phenotype">
    <text evidence="6">Impairs both honey and host odor attraction. Leads to DEET insensitivity.</text>
</comment>
<comment type="miscellaneous">
    <text>The atypical heteromeric and topological design of the odorant receptors appears to be an insect-specific solution for odor recognition, making the OR/Orco complex an attractive target for the development of highly selective insect repellents to disrupt olfactory-mediated host-seeking behaviors of insect disease vectors. Odor-evoked OR currents are independent of known G-protein-coupled second messenger pathways. The homomeric Orco channel is thought to be a cyclic-nucleotide-gated ion channel that depolarizes the olfactory receptor neuron. While many natural and synthetic odorants have been shown to agonize Orco/Or complexes, only a single direct Orco agonist, VUAA1, has been described. On the contrary, amiloride derivatives block Orco/Or complexes.</text>
</comment>
<comment type="similarity">
    <text evidence="7">Belongs to the insect chemoreceptor superfamily. Heteromeric odorant receptor channel (TC 1.A.69) family. Orco subfamily.</text>
</comment>
<comment type="online information" name="Protein Spotlight">
    <link uri="https://www.proteinspotlight.org/back_issues/161/"/>
    <text>The senses confused - Issue 161 of June 2014</text>
</comment>
<dbReference type="EMBL" id="CH477359">
    <property type="protein sequence ID" value="EAT42706.1"/>
    <property type="molecule type" value="Genomic_DNA"/>
</dbReference>
<dbReference type="EMBL" id="AY582943">
    <property type="protein sequence ID" value="AAT01220.1"/>
    <property type="molecule type" value="mRNA"/>
</dbReference>
<dbReference type="RefSeq" id="XP_001651426.1">
    <property type="nucleotide sequence ID" value="XM_001651376.1"/>
</dbReference>
<dbReference type="SMR" id="Q178U6"/>
<dbReference type="FunCoup" id="Q178U6">
    <property type="interactions" value="21"/>
</dbReference>
<dbReference type="STRING" id="7159.Q178U6"/>
<dbReference type="GlyCosmos" id="Q178U6">
    <property type="glycosylation" value="1 site, No reported glycans"/>
</dbReference>
<dbReference type="PaxDb" id="7159-AAEL005776-PA"/>
<dbReference type="EnsemblMetazoa" id="AAEL005776-RA">
    <property type="protein sequence ID" value="AAEL005776-PA"/>
    <property type="gene ID" value="AAEL005776"/>
</dbReference>
<dbReference type="VEuPathDB" id="VectorBase:AAEL005776"/>
<dbReference type="eggNOG" id="ENOG502QR02">
    <property type="taxonomic scope" value="Eukaryota"/>
</dbReference>
<dbReference type="HOGENOM" id="CLU_045605_0_0_1"/>
<dbReference type="InParanoid" id="Q178U6"/>
<dbReference type="OMA" id="VERHKHI"/>
<dbReference type="OrthoDB" id="8175157at2759"/>
<dbReference type="PhylomeDB" id="Q178U6"/>
<dbReference type="Proteomes" id="UP000008820">
    <property type="component" value="Chromosome 3"/>
</dbReference>
<dbReference type="Proteomes" id="UP000682892">
    <property type="component" value="Chromosome 3"/>
</dbReference>
<dbReference type="GO" id="GO:0005886">
    <property type="term" value="C:plasma membrane"/>
    <property type="evidence" value="ECO:0007669"/>
    <property type="project" value="UniProtKB-SubCell"/>
</dbReference>
<dbReference type="GO" id="GO:0005549">
    <property type="term" value="F:odorant binding"/>
    <property type="evidence" value="ECO:0007669"/>
    <property type="project" value="InterPro"/>
</dbReference>
<dbReference type="GO" id="GO:0004984">
    <property type="term" value="F:olfactory receptor activity"/>
    <property type="evidence" value="ECO:0000315"/>
    <property type="project" value="UniProtKB"/>
</dbReference>
<dbReference type="GO" id="GO:0042755">
    <property type="term" value="P:eating behavior"/>
    <property type="evidence" value="ECO:0000315"/>
    <property type="project" value="UniProtKB"/>
</dbReference>
<dbReference type="GO" id="GO:0007165">
    <property type="term" value="P:signal transduction"/>
    <property type="evidence" value="ECO:0007669"/>
    <property type="project" value="UniProtKB-KW"/>
</dbReference>
<dbReference type="InterPro" id="IPR004117">
    <property type="entry name" value="7tm6_olfct_rcpt"/>
</dbReference>
<dbReference type="PANTHER" id="PTHR21137">
    <property type="entry name" value="ODORANT RECEPTOR"/>
    <property type="match status" value="1"/>
</dbReference>
<dbReference type="PANTHER" id="PTHR21137:SF9">
    <property type="entry name" value="ODORANT RECEPTOR CORECEPTOR"/>
    <property type="match status" value="1"/>
</dbReference>
<dbReference type="Pfam" id="PF02949">
    <property type="entry name" value="7tm_6"/>
    <property type="match status" value="1"/>
</dbReference>
<organism>
    <name type="scientific">Aedes aegypti</name>
    <name type="common">Yellowfever mosquito</name>
    <name type="synonym">Culex aegypti</name>
    <dbReference type="NCBI Taxonomy" id="7159"/>
    <lineage>
        <taxon>Eukaryota</taxon>
        <taxon>Metazoa</taxon>
        <taxon>Ecdysozoa</taxon>
        <taxon>Arthropoda</taxon>
        <taxon>Hexapoda</taxon>
        <taxon>Insecta</taxon>
        <taxon>Pterygota</taxon>
        <taxon>Neoptera</taxon>
        <taxon>Endopterygota</taxon>
        <taxon>Diptera</taxon>
        <taxon>Nematocera</taxon>
        <taxon>Culicoidea</taxon>
        <taxon>Culicidae</taxon>
        <taxon>Culicinae</taxon>
        <taxon>Aedini</taxon>
        <taxon>Aedes</taxon>
        <taxon>Stegomyia</taxon>
    </lineage>
</organism>
<reference key="1">
    <citation type="journal article" date="2007" name="Science">
        <title>Genome sequence of Aedes aegypti, a major arbovirus vector.</title>
        <authorList>
            <person name="Nene V."/>
            <person name="Wortman J.R."/>
            <person name="Lawson D."/>
            <person name="Haas B.J."/>
            <person name="Kodira C.D."/>
            <person name="Tu Z.J."/>
            <person name="Loftus B.J."/>
            <person name="Xi Z."/>
            <person name="Megy K."/>
            <person name="Grabherr M."/>
            <person name="Ren Q."/>
            <person name="Zdobnov E.M."/>
            <person name="Lobo N.F."/>
            <person name="Campbell K.S."/>
            <person name="Brown S.E."/>
            <person name="Bonaldo M.F."/>
            <person name="Zhu J."/>
            <person name="Sinkins S.P."/>
            <person name="Hogenkamp D.G."/>
            <person name="Amedeo P."/>
            <person name="Arensburger P."/>
            <person name="Atkinson P.W."/>
            <person name="Bidwell S.L."/>
            <person name="Biedler J."/>
            <person name="Birney E."/>
            <person name="Bruggner R.V."/>
            <person name="Costas J."/>
            <person name="Coy M.R."/>
            <person name="Crabtree J."/>
            <person name="Crawford M."/>
            <person name="DeBruyn B."/>
            <person name="DeCaprio D."/>
            <person name="Eiglmeier K."/>
            <person name="Eisenstadt E."/>
            <person name="El-Dorry H."/>
            <person name="Gelbart W.M."/>
            <person name="Gomes S.L."/>
            <person name="Hammond M."/>
            <person name="Hannick L.I."/>
            <person name="Hogan J.R."/>
            <person name="Holmes M.H."/>
            <person name="Jaffe D."/>
            <person name="Johnston S.J."/>
            <person name="Kennedy R.C."/>
            <person name="Koo H."/>
            <person name="Kravitz S."/>
            <person name="Kriventseva E.V."/>
            <person name="Kulp D."/>
            <person name="Labutti K."/>
            <person name="Lee E."/>
            <person name="Li S."/>
            <person name="Lovin D.D."/>
            <person name="Mao C."/>
            <person name="Mauceli E."/>
            <person name="Menck C.F."/>
            <person name="Miller J.R."/>
            <person name="Montgomery P."/>
            <person name="Mori A."/>
            <person name="Nascimento A.L."/>
            <person name="Naveira H.F."/>
            <person name="Nusbaum C."/>
            <person name="O'Leary S.B."/>
            <person name="Orvis J."/>
            <person name="Pertea M."/>
            <person name="Quesneville H."/>
            <person name="Reidenbach K.R."/>
            <person name="Rogers Y.-H.C."/>
            <person name="Roth C.W."/>
            <person name="Schneider J.R."/>
            <person name="Schatz M."/>
            <person name="Shumway M."/>
            <person name="Stanke M."/>
            <person name="Stinson E.O."/>
            <person name="Tubio J.M.C."/>
            <person name="Vanzee J.P."/>
            <person name="Verjovski-Almeida S."/>
            <person name="Werner D."/>
            <person name="White O.R."/>
            <person name="Wyder S."/>
            <person name="Zeng Q."/>
            <person name="Zhao Q."/>
            <person name="Zhao Y."/>
            <person name="Hill C.A."/>
            <person name="Raikhel A.S."/>
            <person name="Soares M.B."/>
            <person name="Knudson D.L."/>
            <person name="Lee N.H."/>
            <person name="Galagan J."/>
            <person name="Salzberg S.L."/>
            <person name="Paulsen I.T."/>
            <person name="Dimopoulos G."/>
            <person name="Collins F.H."/>
            <person name="Bruce B."/>
            <person name="Fraser-Liggett C.M."/>
            <person name="Severson D.W."/>
        </authorList>
    </citation>
    <scope>NUCLEOTIDE SEQUENCE [LARGE SCALE GENOMIC DNA]</scope>
    <source>
        <strain>LVPib12</strain>
    </source>
</reference>
<reference key="2">
    <citation type="journal article" date="2004" name="Chem. Senses">
        <title>Identification of a chemosensory receptor from the yellow fever mosquito, Aedes aegypti, that is highly conserved and expressed in olfactory and gustatory organs.</title>
        <authorList>
            <person name="Melo A.C."/>
            <person name="Rutzler M."/>
            <person name="Pitts R.J."/>
            <person name="Zwiebel L.J."/>
        </authorList>
    </citation>
    <scope>NUCLEOTIDE SEQUENCE [MRNA] OF 10-478</scope>
    <scope>FUNCTION</scope>
    <scope>TISSUE SPECIFICITY</scope>
    <source>
        <strain>Costa Rica</strain>
    </source>
</reference>
<reference key="3">
    <citation type="journal article" date="2011" name="PLoS ONE">
        <title>Functional characterization of the octenol receptor neuron on the maxillary palps of the yellow fever mosquito, Aedes aegypti.</title>
        <authorList>
            <person name="Grant A.J."/>
            <person name="Dickens J.C."/>
        </authorList>
    </citation>
    <scope>FUNCTION</scope>
</reference>
<reference key="4">
    <citation type="journal article" date="2012" name="Neuropharmacology">
        <title>Odorant receptor modulation: ternary paradigm for mode of action of insect repellents.</title>
        <authorList>
            <person name="Bohbot J.D."/>
            <person name="Dickens J.C."/>
        </authorList>
    </citation>
    <scope>FUNCTION</scope>
    <scope>INTERACTION WITH ODORANT RECEPTORS</scope>
</reference>
<reference key="5">
    <citation type="journal article" date="2013" name="Nature">
        <title>orco mutant mosquitoes lose strong preference for humans and are not repelled by volatile DEET.</title>
        <authorList>
            <person name="DeGennaro M."/>
            <person name="McBride C.S."/>
            <person name="Seeholzer L."/>
            <person name="Nakagawa T."/>
            <person name="Dennis E.J."/>
            <person name="Goldman C."/>
            <person name="Jasinskiene N."/>
            <person name="James A.A."/>
            <person name="Vosshall L.B."/>
        </authorList>
    </citation>
    <scope>FUNCTION</scope>
    <scope>DISRUPTION PHENOTYPE</scope>
</reference>
<proteinExistence type="evidence at protein level"/>
<accession>Q178U6</accession>
<accession>Q6PSG4</accession>
<protein>
    <recommendedName>
        <fullName>Odorant receptor coreceptor</fullName>
    </recommendedName>
    <alternativeName>
        <fullName>Gustatory and odorant receptor 7</fullName>
    </alternativeName>
</protein>
<evidence type="ECO:0000250" key="1"/>
<evidence type="ECO:0000255" key="2"/>
<evidence type="ECO:0000269" key="3">
    <source>
    </source>
</evidence>
<evidence type="ECO:0000269" key="4">
    <source>
    </source>
</evidence>
<evidence type="ECO:0000269" key="5">
    <source>
    </source>
</evidence>
<evidence type="ECO:0000269" key="6">
    <source>
    </source>
</evidence>
<evidence type="ECO:0000305" key="7"/>
<sequence>MNVQPTKYHGLVLDLMPNIRLMQGFGHFLFRYVNGPVLIRKLYSWWNLIMILLQYFAIMGNLVMNTGDVNELTANTITTLFFTHSVTKFIYVAVNSEHFYRTLGIWNQPNSHSLFAESDARYHSIALAKMRKLLVMVMVTTVLSVVAWITITFFGDSVKNVFDKETNETYTVEIPRLPIKAWYPWDAMSGVPYFFSFIYQAYFLLFSMCQANLADVMFCSWLLFTCEQLQHLKGIMRPLMELSATLDTYRPNSAALFRVASAGSKSELILNEEKDPDTKDFDLNGIYNSKADWGAQFRAPSTLQTFGDNGINGNPNGLTKKQELMVRSAIKYWVERHKHVVRLVSAIGETYGAALLLHMLTSTIKLTLLAYQATKIDALNVYGLTVIGYLVYALAQVFLFCIFGNRLIEESSSVMEAAYSCHWYDGSEEAKTFVQIVCQQCQKAMTISGAKFFTVSLDLFASVLGAVVTYFMVLVQLK</sequence>
<name>ORCO_AEDAE</name>